<keyword id="KW-0025">Alternative splicing</keyword>
<keyword id="KW-0067">ATP-binding</keyword>
<keyword id="KW-0158">Chromosome</keyword>
<keyword id="KW-0227">DNA damage</keyword>
<keyword id="KW-0234">DNA repair</keyword>
<keyword id="KW-0238">DNA-binding</keyword>
<keyword id="KW-0347">Helicase</keyword>
<keyword id="KW-0378">Hydrolase</keyword>
<keyword id="KW-0413">Isomerase</keyword>
<keyword id="KW-0547">Nucleotide-binding</keyword>
<keyword id="KW-0539">Nucleus</keyword>
<keyword id="KW-1185">Reference proteome</keyword>
<sequence length="923" mass="102969">MNRTPIRRCKSAEIEEDPFSPIPKFSRLRTPRTSREYVCPLKSTSPQSPSSSTENEPPPVSVTSPPARKRALEESTVTPIQQKIGPPVLKRSSLSKLADGFRTAAYLNNESENDDDPFGLSFRNEQVLMSKCAPAPEKRPETLTLDPSKCLPERDMEMYRKIKKLDKFYDWQQECLSDKRLLDGENCILSLPTGAGKTLIAEVLMLREAIVRKRNAILVLPYVAIVQEKISALAPFEDAFGINIEEYASNKGRFPPIKRRKRVSVYVATIEKANMLINSLITQGQLDRVGMVVVDELHMIGDGGRGAILEQLLAKFLYKGTGQIVGMSATLPNIDDLKFALRAFVYSTNFRPVELTEFVKIGQTMHQVSENGDLNPAGDLPTNNLKSTDPDGICQLLAKLIPKNSAVIFCPNKKNCENVAVLIAKTLPAHIRQAKRAESDAFLQSYLSDNDDERMDAVLKQCILSGVAYHHSGLTQDERKCVEAAFMEGLIYVVCATSTLAAGVNLPVRRVIIKAPMVGRERLGKAQYLQMAGRAGRAGFDTKGDCITIIKAGEEERWFREMLKSDIPRCMSSLSSEESMGSFILDCVVLKLAENIEEIMTAVRYSLFYAQESPENIRKLVESSVKRLEEHYFITIEPLEQDVASEPSAQASSIPRVPGKISPSDLGNAVFNAGFDPDEATRLHADLVSSLNQGVIFASHFHLLFIITPYEQVCNINWDLFLLMYNALPSSERKLLAECGLEEKFILEAIITRVDLTAGTPRMRLYIALMLQKIWNHEPMYTVAERFGVEKGWLQATLQSSISQAASIAKFSEKITTMWPLRKLLPELVQRLSEAAQPELLPLMTVDGIKKARAAILFKAGYKTVGMIARANPLKLVQELGTIRMAQANSIIASARMVLRDQVDEKMEELDVWGVATDSFNYF</sequence>
<gene>
    <name evidence="7 9" type="primary">helq-1</name>
    <name evidence="9" type="ORF">Y55B1AL.3</name>
</gene>
<evidence type="ECO:0000250" key="1">
    <source>
        <dbReference type="UniProtKB" id="Q8TDG4"/>
    </source>
</evidence>
<evidence type="ECO:0000255" key="2">
    <source>
        <dbReference type="PROSITE-ProRule" id="PRU00541"/>
    </source>
</evidence>
<evidence type="ECO:0000255" key="3">
    <source>
        <dbReference type="PROSITE-ProRule" id="PRU00542"/>
    </source>
</evidence>
<evidence type="ECO:0000256" key="4">
    <source>
        <dbReference type="SAM" id="MobiDB-lite"/>
    </source>
</evidence>
<evidence type="ECO:0000269" key="5">
    <source>
    </source>
</evidence>
<evidence type="ECO:0000269" key="6">
    <source>
    </source>
</evidence>
<evidence type="ECO:0000303" key="7">
    <source>
    </source>
</evidence>
<evidence type="ECO:0000305" key="8"/>
<evidence type="ECO:0000312" key="9">
    <source>
        <dbReference type="WormBase" id="Y55B1AL.3a"/>
    </source>
</evidence>
<proteinExistence type="inferred from homology"/>
<comment type="function">
    <text evidence="5 6">Single-stranded 3'-5' DNA helicase that plays a key role in homology-driven double-strand break (DSB) repair (PubMed:18472307, PubMed:34880204). Involved in different DSB repair mechanisms that are guided by annealing of extensive stretches of complementary bases at break ends, such as microhomology-mediated end-joining (MMEJ), single-strand annealing (SSA) or synthesis-dependent strand annealing (SDSA) (PubMed:34880204).</text>
</comment>
<comment type="catalytic activity">
    <reaction evidence="1">
        <text>Couples ATP hydrolysis with the unwinding of duplex DNA by translocating in the 3'-5' direction.</text>
        <dbReference type="EC" id="5.6.2.4"/>
    </reaction>
</comment>
<comment type="catalytic activity">
    <reaction evidence="1">
        <text>ATP + H2O = ADP + phosphate + H(+)</text>
        <dbReference type="Rhea" id="RHEA:13065"/>
        <dbReference type="ChEBI" id="CHEBI:15377"/>
        <dbReference type="ChEBI" id="CHEBI:15378"/>
        <dbReference type="ChEBI" id="CHEBI:30616"/>
        <dbReference type="ChEBI" id="CHEBI:43474"/>
        <dbReference type="ChEBI" id="CHEBI:456216"/>
        <dbReference type="EC" id="5.6.2.4"/>
    </reaction>
</comment>
<comment type="subcellular location">
    <subcellularLocation>
        <location evidence="1">Nucleus</location>
    </subcellularLocation>
    <subcellularLocation>
        <location evidence="1">Chromosome</location>
    </subcellularLocation>
    <text evidence="1">Localizes to sites of DNA damage.</text>
</comment>
<comment type="alternative products">
    <event type="alternative splicing"/>
    <isoform>
        <id>H2KY86-1</id>
        <name>1</name>
        <sequence type="displayed"/>
    </isoform>
    <isoform>
        <id>H2KY86-2</id>
        <name>b</name>
        <sequence type="described" ref="VSP_061492"/>
    </isoform>
</comment>
<comment type="similarity">
    <text evidence="8">Belongs to the helicase family. SKI2 subfamily.</text>
</comment>
<name>HELQ_CAEEL</name>
<dbReference type="EC" id="5.6.2.4" evidence="1"/>
<dbReference type="EMBL" id="BX284603">
    <property type="protein sequence ID" value="CCD61810.1"/>
    <property type="molecule type" value="Genomic_DNA"/>
</dbReference>
<dbReference type="EMBL" id="BX284603">
    <property type="protein sequence ID" value="CCD61811.1"/>
    <property type="molecule type" value="Genomic_DNA"/>
</dbReference>
<dbReference type="RefSeq" id="NP_001022911.1">
    <molecule id="H2KY86-1"/>
    <property type="nucleotide sequence ID" value="NM_001027740.7"/>
</dbReference>
<dbReference type="RefSeq" id="NP_001022912.1">
    <property type="nucleotide sequence ID" value="NM_001027741.2"/>
</dbReference>
<dbReference type="RefSeq" id="NP_001379571.1">
    <molecule id="H2KY86-2"/>
    <property type="nucleotide sequence ID" value="NM_001393258.1"/>
</dbReference>
<dbReference type="SMR" id="H2KY86"/>
<dbReference type="FunCoup" id="H2KY86">
    <property type="interactions" value="1875"/>
</dbReference>
<dbReference type="STRING" id="6239.Y55B1AL.3a.1"/>
<dbReference type="PaxDb" id="6239-Y55B1AL.3a"/>
<dbReference type="PeptideAtlas" id="H2KY86"/>
<dbReference type="EnsemblMetazoa" id="Y55B1AL.3a.1">
    <molecule id="H2KY86-1"/>
    <property type="protein sequence ID" value="Y55B1AL.3a.1"/>
    <property type="gene ID" value="WBGene00021905"/>
</dbReference>
<dbReference type="EnsemblMetazoa" id="Y55B1AL.3b.1">
    <molecule id="H2KY86-2"/>
    <property type="protein sequence ID" value="Y55B1AL.3b.1"/>
    <property type="gene ID" value="WBGene00021905"/>
</dbReference>
<dbReference type="EnsemblMetazoa" id="Y55B1AL.3b.2">
    <molecule id="H2KY86-2"/>
    <property type="protein sequence ID" value="Y55B1AL.3b.2"/>
    <property type="gene ID" value="WBGene00021905"/>
</dbReference>
<dbReference type="EnsemblMetazoa" id="Y55B1AL.3b.3">
    <molecule id="H2KY86-2"/>
    <property type="protein sequence ID" value="Y55B1AL.3b.3"/>
    <property type="gene ID" value="WBGene00021905"/>
</dbReference>
<dbReference type="GeneID" id="175210"/>
<dbReference type="KEGG" id="cel:CELE_Y55B1AL.3"/>
<dbReference type="UCSC" id="Y55B1AL.3b.1">
    <property type="organism name" value="c. elegans"/>
</dbReference>
<dbReference type="AGR" id="WB:WBGene00021905"/>
<dbReference type="CTD" id="175210"/>
<dbReference type="WormBase" id="Y55B1AL.3a">
    <molecule id="H2KY86-1"/>
    <property type="protein sequence ID" value="CE27019"/>
    <property type="gene ID" value="WBGene00021905"/>
    <property type="gene designation" value="helq-1"/>
</dbReference>
<dbReference type="WormBase" id="Y55B1AL.3b">
    <molecule id="H2KY86-2"/>
    <property type="protein sequence ID" value="CE37439"/>
    <property type="gene ID" value="WBGene00021905"/>
    <property type="gene designation" value="helq-1"/>
</dbReference>
<dbReference type="eggNOG" id="KOG0950">
    <property type="taxonomic scope" value="Eukaryota"/>
</dbReference>
<dbReference type="GeneTree" id="ENSGT00940000157350"/>
<dbReference type="HOGENOM" id="CLU_006553_1_0_1"/>
<dbReference type="InParanoid" id="H2KY86"/>
<dbReference type="OMA" id="MFLNANI"/>
<dbReference type="OrthoDB" id="2320933at2759"/>
<dbReference type="PhylomeDB" id="H2KY86"/>
<dbReference type="PRO" id="PR:H2KY86"/>
<dbReference type="Proteomes" id="UP000001940">
    <property type="component" value="Chromosome III"/>
</dbReference>
<dbReference type="Bgee" id="WBGene00021905">
    <property type="expression patterns" value="Expressed in pharyngeal muscle cell (C elegans) and 4 other cell types or tissues"/>
</dbReference>
<dbReference type="ExpressionAtlas" id="H2KY86">
    <property type="expression patterns" value="baseline and differential"/>
</dbReference>
<dbReference type="GO" id="GO:0005694">
    <property type="term" value="C:chromosome"/>
    <property type="evidence" value="ECO:0007669"/>
    <property type="project" value="UniProtKB-SubCell"/>
</dbReference>
<dbReference type="GO" id="GO:0005634">
    <property type="term" value="C:nucleus"/>
    <property type="evidence" value="ECO:0007669"/>
    <property type="project" value="UniProtKB-SubCell"/>
</dbReference>
<dbReference type="GO" id="GO:0005524">
    <property type="term" value="F:ATP binding"/>
    <property type="evidence" value="ECO:0007669"/>
    <property type="project" value="UniProtKB-KW"/>
</dbReference>
<dbReference type="GO" id="GO:0051117">
    <property type="term" value="F:ATPase binding"/>
    <property type="evidence" value="ECO:0000353"/>
    <property type="project" value="WormBase"/>
</dbReference>
<dbReference type="GO" id="GO:0003677">
    <property type="term" value="F:DNA binding"/>
    <property type="evidence" value="ECO:0007669"/>
    <property type="project" value="UniProtKB-KW"/>
</dbReference>
<dbReference type="GO" id="GO:0016787">
    <property type="term" value="F:hydrolase activity"/>
    <property type="evidence" value="ECO:0007669"/>
    <property type="project" value="UniProtKB-KW"/>
</dbReference>
<dbReference type="GO" id="GO:0017116">
    <property type="term" value="F:single-stranded DNA helicase activity"/>
    <property type="evidence" value="ECO:0000314"/>
    <property type="project" value="WormBase"/>
</dbReference>
<dbReference type="GO" id="GO:0010792">
    <property type="term" value="P:DNA double-strand break processing involved in repair via single-strand annealing"/>
    <property type="evidence" value="ECO:0000314"/>
    <property type="project" value="UniProtKB"/>
</dbReference>
<dbReference type="GO" id="GO:0097681">
    <property type="term" value="P:double-strand break repair via alternative nonhomologous end joining"/>
    <property type="evidence" value="ECO:0000314"/>
    <property type="project" value="UniProtKB"/>
</dbReference>
<dbReference type="GO" id="GO:0045003">
    <property type="term" value="P:double-strand break repair via synthesis-dependent strand annealing"/>
    <property type="evidence" value="ECO:0000314"/>
    <property type="project" value="UniProtKB"/>
</dbReference>
<dbReference type="GO" id="GO:0000712">
    <property type="term" value="P:resolution of meiotic recombination intermediates"/>
    <property type="evidence" value="ECO:0000316"/>
    <property type="project" value="WormBase"/>
</dbReference>
<dbReference type="CDD" id="cd18026">
    <property type="entry name" value="DEXHc_POLQ-like"/>
    <property type="match status" value="1"/>
</dbReference>
<dbReference type="CDD" id="cd18795">
    <property type="entry name" value="SF2_C_Ski2"/>
    <property type="match status" value="1"/>
</dbReference>
<dbReference type="FunFam" id="3.40.50.300:FF:000813">
    <property type="entry name" value="helicase POLQ-like isoform X1"/>
    <property type="match status" value="1"/>
</dbReference>
<dbReference type="FunFam" id="1.10.3380.20:FF:000007">
    <property type="entry name" value="HELicase Q homolog"/>
    <property type="match status" value="1"/>
</dbReference>
<dbReference type="FunFam" id="3.40.50.300:FF:005598">
    <property type="entry name" value="HELicase Q homolog"/>
    <property type="match status" value="1"/>
</dbReference>
<dbReference type="Gene3D" id="1.10.3380.20">
    <property type="match status" value="1"/>
</dbReference>
<dbReference type="Gene3D" id="3.40.50.300">
    <property type="entry name" value="P-loop containing nucleotide triphosphate hydrolases"/>
    <property type="match status" value="2"/>
</dbReference>
<dbReference type="InterPro" id="IPR011545">
    <property type="entry name" value="DEAD/DEAH_box_helicase_dom"/>
</dbReference>
<dbReference type="InterPro" id="IPR050474">
    <property type="entry name" value="Hel308_SKI2-like"/>
</dbReference>
<dbReference type="InterPro" id="IPR014001">
    <property type="entry name" value="Helicase_ATP-bd"/>
</dbReference>
<dbReference type="InterPro" id="IPR001650">
    <property type="entry name" value="Helicase_C-like"/>
</dbReference>
<dbReference type="InterPro" id="IPR046931">
    <property type="entry name" value="HTH_61"/>
</dbReference>
<dbReference type="InterPro" id="IPR027417">
    <property type="entry name" value="P-loop_NTPase"/>
</dbReference>
<dbReference type="InterPro" id="IPR048960">
    <property type="entry name" value="POLQ-like_helical"/>
</dbReference>
<dbReference type="PANTHER" id="PTHR47961">
    <property type="entry name" value="DNA POLYMERASE THETA, PUTATIVE (AFU_ORTHOLOGUE AFUA_1G05260)-RELATED"/>
    <property type="match status" value="1"/>
</dbReference>
<dbReference type="PANTHER" id="PTHR47961:SF12">
    <property type="entry name" value="HELICASE POLQ-LIKE"/>
    <property type="match status" value="1"/>
</dbReference>
<dbReference type="Pfam" id="PF00270">
    <property type="entry name" value="DEAD"/>
    <property type="match status" value="1"/>
</dbReference>
<dbReference type="Pfam" id="PF00271">
    <property type="entry name" value="Helicase_C"/>
    <property type="match status" value="1"/>
</dbReference>
<dbReference type="Pfam" id="PF20470">
    <property type="entry name" value="HTH_61"/>
    <property type="match status" value="1"/>
</dbReference>
<dbReference type="Pfam" id="PF21099">
    <property type="entry name" value="POLQ_helical"/>
    <property type="match status" value="1"/>
</dbReference>
<dbReference type="SMART" id="SM00487">
    <property type="entry name" value="DEXDc"/>
    <property type="match status" value="1"/>
</dbReference>
<dbReference type="SMART" id="SM00490">
    <property type="entry name" value="HELICc"/>
    <property type="match status" value="1"/>
</dbReference>
<dbReference type="SUPFAM" id="SSF52540">
    <property type="entry name" value="P-loop containing nucleoside triphosphate hydrolases"/>
    <property type="match status" value="1"/>
</dbReference>
<dbReference type="SUPFAM" id="SSF158702">
    <property type="entry name" value="Sec63 N-terminal domain-like"/>
    <property type="match status" value="1"/>
</dbReference>
<dbReference type="PROSITE" id="PS51192">
    <property type="entry name" value="HELICASE_ATP_BIND_1"/>
    <property type="match status" value="1"/>
</dbReference>
<dbReference type="PROSITE" id="PS51194">
    <property type="entry name" value="HELICASE_CTER"/>
    <property type="match status" value="1"/>
</dbReference>
<feature type="chain" id="PRO_0000455410" description="Helicase POLQ-like">
    <location>
        <begin position="1"/>
        <end position="923"/>
    </location>
</feature>
<feature type="domain" description="Helicase ATP-binding" evidence="2">
    <location>
        <begin position="178"/>
        <end position="349"/>
    </location>
</feature>
<feature type="domain" description="Helicase C-terminal" evidence="3">
    <location>
        <begin position="392"/>
        <end position="596"/>
    </location>
</feature>
<feature type="region of interest" description="Disordered" evidence="4">
    <location>
        <begin position="1"/>
        <end position="84"/>
    </location>
</feature>
<feature type="short sequence motif" description="DEAH box" evidence="2">
    <location>
        <begin position="295"/>
        <end position="298"/>
    </location>
</feature>
<feature type="compositionally biased region" description="Low complexity" evidence="4">
    <location>
        <begin position="43"/>
        <end position="55"/>
    </location>
</feature>
<feature type="binding site" evidence="2">
    <location>
        <begin position="191"/>
        <end position="198"/>
    </location>
    <ligand>
        <name>ATP</name>
        <dbReference type="ChEBI" id="CHEBI:30616"/>
    </ligand>
</feature>
<feature type="splice variant" id="VSP_061492" description="In isoform b.">
    <location>
        <begin position="1"/>
        <end position="454"/>
    </location>
</feature>
<reference key="1">
    <citation type="journal article" date="1998" name="Science">
        <title>Genome sequence of the nematode C. elegans: a platform for investigating biology.</title>
        <authorList>
            <consortium name="The C. elegans sequencing consortium"/>
        </authorList>
    </citation>
    <scope>NUCLEOTIDE SEQUENCE [LARGE SCALE GENOMIC DNA]</scope>
    <source>
        <strain>Bristol N2</strain>
    </source>
</reference>
<reference key="2">
    <citation type="journal article" date="2008" name="DNA Repair">
        <title>Caenorhabditis elegans POLQ-1 and HEL-308 function in two distinct DNA interstrand cross-link repair pathways.</title>
        <authorList>
            <person name="Muzzini D.M."/>
            <person name="Plevani P."/>
            <person name="Boulton S.J."/>
            <person name="Cassata G."/>
            <person name="Marini F."/>
        </authorList>
    </citation>
    <scope>FUNCTION</scope>
</reference>
<reference key="3">
    <citation type="journal article" date="2021" name="Nat. Commun.">
        <title>Helicase Q promotes homology-driven DNA double-strand break repair and prevents tandem duplications.</title>
        <authorList>
            <person name="Kamp J.A."/>
            <person name="Lemmens B.B.L.G."/>
            <person name="Romeijn R.J."/>
            <person name="Changoer S.C."/>
            <person name="van Schendel R."/>
            <person name="Tijsterman M."/>
        </authorList>
    </citation>
    <scope>FUNCTION</scope>
</reference>
<accession>H2KY86</accession>
<accession>Q65XX0</accession>
<protein>
    <recommendedName>
        <fullName evidence="8">Helicase POLQ-like</fullName>
        <ecNumber evidence="1">5.6.2.4</ecNumber>
    </recommendedName>
</protein>
<organism>
    <name type="scientific">Caenorhabditis elegans</name>
    <dbReference type="NCBI Taxonomy" id="6239"/>
    <lineage>
        <taxon>Eukaryota</taxon>
        <taxon>Metazoa</taxon>
        <taxon>Ecdysozoa</taxon>
        <taxon>Nematoda</taxon>
        <taxon>Chromadorea</taxon>
        <taxon>Rhabditida</taxon>
        <taxon>Rhabditina</taxon>
        <taxon>Rhabditomorpha</taxon>
        <taxon>Rhabditoidea</taxon>
        <taxon>Rhabditidae</taxon>
        <taxon>Peloderinae</taxon>
        <taxon>Caenorhabditis</taxon>
    </lineage>
</organism>